<comment type="function">
    <text evidence="2">Gamma chains make up the fetal hemoglobin F, in combination with alpha chains.</text>
</comment>
<comment type="subunit">
    <text evidence="2 5">Heterotetramer of two alpha chains and two gamma chains in fetal hemoglobin (Hb F) (By similarity). The ratio of gamma-G to gamma-A chains in is approximately 2:1 in infant chimpanzee, and 1:2 in the adult (PubMed:1342932).</text>
</comment>
<comment type="tissue specificity">
    <text>Red blood cells.</text>
</comment>
<comment type="similarity">
    <text evidence="3">Belongs to the globin family.</text>
</comment>
<reference key="1">
    <citation type="journal article" date="1985" name="Mol. Biol. Evol.">
        <title>Chimpanzee fetal G gamma and A gamma globin gene nucleotide sequences provide further evidence of gene conversions in hominine evolution.</title>
        <authorList>
            <person name="Slightom J.L."/>
            <person name="Chang L.-Y.E."/>
            <person name="Koop B.F."/>
            <person name="Goodman M."/>
        </authorList>
    </citation>
    <scope>NUCLEOTIDE SEQUENCE [GENOMIC DNA]</scope>
</reference>
<reference key="2">
    <citation type="journal article" date="1992" name="Mol. Phylogenet. Evol.">
        <title>Reexamination of the African hominoid trichotomy with additional sequences from the primate beta-globin gene cluster.</title>
        <authorList>
            <person name="Bailey W.J."/>
            <person name="Hayasaka K."/>
            <person name="Skinner C.G."/>
            <person name="Kehoe S."/>
            <person name="Sieu L.C."/>
            <person name="Slightom J.L."/>
            <person name="Goodman M."/>
        </authorList>
    </citation>
    <scope>NUCLEOTIDE SEQUENCE [GENOMIC DNA]</scope>
</reference>
<reference key="3">
    <citation type="journal article" date="1971" name="Biochim. Biophys. Acta">
        <title>Chimpanzee foetal haemoglobin: structure and heterogeneity of the gamma chain.</title>
        <authorList>
            <person name="de Jong W.W.W."/>
        </authorList>
    </citation>
    <scope>PROTEIN SEQUENCE OF 2-147</scope>
</reference>
<organism>
    <name type="scientific">Pan troglodytes</name>
    <name type="common">Chimpanzee</name>
    <dbReference type="NCBI Taxonomy" id="9598"/>
    <lineage>
        <taxon>Eukaryota</taxon>
        <taxon>Metazoa</taxon>
        <taxon>Chordata</taxon>
        <taxon>Craniata</taxon>
        <taxon>Vertebrata</taxon>
        <taxon>Euteleostomi</taxon>
        <taxon>Mammalia</taxon>
        <taxon>Eutheria</taxon>
        <taxon>Euarchontoglires</taxon>
        <taxon>Primates</taxon>
        <taxon>Haplorrhini</taxon>
        <taxon>Catarrhini</taxon>
        <taxon>Hominidae</taxon>
        <taxon>Pan</taxon>
    </lineage>
</organism>
<keyword id="KW-0007">Acetylation</keyword>
<keyword id="KW-0903">Direct protein sequencing</keyword>
<keyword id="KW-0349">Heme</keyword>
<keyword id="KW-0408">Iron</keyword>
<keyword id="KW-0479">Metal-binding</keyword>
<keyword id="KW-0561">Oxygen transport</keyword>
<keyword id="KW-0597">Phosphoprotein</keyword>
<keyword id="KW-1185">Reference proteome</keyword>
<keyword id="KW-0702">S-nitrosylation</keyword>
<keyword id="KW-0813">Transport</keyword>
<feature type="initiator methionine" description="Removed" evidence="2 4">
    <location>
        <position position="1"/>
    </location>
</feature>
<feature type="chain" id="PRO_0000053262" description="Hemoglobin subunit gamma-1">
    <location>
        <begin position="2"/>
        <end position="147"/>
    </location>
</feature>
<feature type="domain" description="Globin" evidence="3">
    <location>
        <begin position="3"/>
        <end position="147"/>
    </location>
</feature>
<feature type="binding site" description="distal binding residue" evidence="3">
    <location>
        <position position="64"/>
    </location>
    <ligand>
        <name>heme b</name>
        <dbReference type="ChEBI" id="CHEBI:60344"/>
    </ligand>
    <ligandPart>
        <name>Fe</name>
        <dbReference type="ChEBI" id="CHEBI:18248"/>
    </ligandPart>
</feature>
<feature type="binding site" description="proximal binding residue" evidence="3">
    <location>
        <position position="93"/>
    </location>
    <ligand>
        <name>heme b</name>
        <dbReference type="ChEBI" id="CHEBI:60344"/>
    </ligand>
    <ligandPart>
        <name>Fe</name>
        <dbReference type="ChEBI" id="CHEBI:18248"/>
    </ligandPart>
</feature>
<feature type="modified residue" description="N-acetylglycine" evidence="2">
    <location>
        <position position="2"/>
    </location>
</feature>
<feature type="modified residue" description="Phosphothreonine" evidence="1">
    <location>
        <position position="13"/>
    </location>
</feature>
<feature type="modified residue" description="Phosphoserine" evidence="2">
    <location>
        <position position="45"/>
    </location>
</feature>
<feature type="modified residue" description="Phosphoserine" evidence="2">
    <location>
        <position position="51"/>
    </location>
</feature>
<feature type="modified residue" description="Phosphoserine" evidence="2">
    <location>
        <position position="53"/>
    </location>
</feature>
<feature type="modified residue" description="N6-acetyllysine" evidence="1">
    <location>
        <position position="60"/>
    </location>
</feature>
<feature type="modified residue" description="N6-acetyllysine" evidence="1">
    <location>
        <position position="83"/>
    </location>
</feature>
<feature type="modified residue" description="S-nitrosocysteine" evidence="1">
    <location>
        <position position="94"/>
    </location>
</feature>
<feature type="modified residue" description="Phosphoserine" evidence="2">
    <location>
        <position position="140"/>
    </location>
</feature>
<gene>
    <name type="primary">HBG1</name>
</gene>
<evidence type="ECO:0000250" key="1">
    <source>
        <dbReference type="UniProtKB" id="P68871"/>
    </source>
</evidence>
<evidence type="ECO:0000250" key="2">
    <source>
        <dbReference type="UniProtKB" id="P69891"/>
    </source>
</evidence>
<evidence type="ECO:0000255" key="3">
    <source>
        <dbReference type="PROSITE-ProRule" id="PRU00238"/>
    </source>
</evidence>
<evidence type="ECO:0000269" key="4">
    <source>
    </source>
</evidence>
<evidence type="ECO:0000269" key="5">
    <source>
    </source>
</evidence>
<protein>
    <recommendedName>
        <fullName>Hemoglobin subunit gamma-1</fullName>
    </recommendedName>
    <alternativeName>
        <fullName>Gamma-1-globin</fullName>
    </alternativeName>
    <alternativeName>
        <fullName>Hemoglobin gamma-1 chain</fullName>
    </alternativeName>
    <alternativeName>
        <fullName>Hemoglobin gamma-A chain</fullName>
    </alternativeName>
</protein>
<name>HBG1_PANTR</name>
<dbReference type="EMBL" id="X03110">
    <property type="protein sequence ID" value="CAA26892.1"/>
    <property type="molecule type" value="Genomic_DNA"/>
</dbReference>
<dbReference type="EMBL" id="M92294">
    <property type="protein sequence ID" value="AAA35410.1"/>
    <property type="molecule type" value="Genomic_DNA"/>
</dbReference>
<dbReference type="PIR" id="I36940">
    <property type="entry name" value="HGCZA"/>
</dbReference>
<dbReference type="RefSeq" id="NP_001129303.1">
    <property type="nucleotide sequence ID" value="NM_001135831.1"/>
</dbReference>
<dbReference type="SMR" id="P61920"/>
<dbReference type="FunCoup" id="P61920">
    <property type="interactions" value="15"/>
</dbReference>
<dbReference type="STRING" id="9598.ENSPTRP00000048282"/>
<dbReference type="PaxDb" id="9598-ENSPTRP00000048283"/>
<dbReference type="GeneID" id="736917"/>
<dbReference type="KEGG" id="ptr:736917"/>
<dbReference type="CTD" id="3047"/>
<dbReference type="eggNOG" id="KOG3378">
    <property type="taxonomic scope" value="Eukaryota"/>
</dbReference>
<dbReference type="InParanoid" id="P61920"/>
<dbReference type="OrthoDB" id="1668at9604"/>
<dbReference type="Proteomes" id="UP000002277">
    <property type="component" value="Unplaced"/>
</dbReference>
<dbReference type="GO" id="GO:0031838">
    <property type="term" value="C:haptoglobin-hemoglobin complex"/>
    <property type="evidence" value="ECO:0000318"/>
    <property type="project" value="GO_Central"/>
</dbReference>
<dbReference type="GO" id="GO:0005833">
    <property type="term" value="C:hemoglobin complex"/>
    <property type="evidence" value="ECO:0000318"/>
    <property type="project" value="GO_Central"/>
</dbReference>
<dbReference type="GO" id="GO:0020037">
    <property type="term" value="F:heme binding"/>
    <property type="evidence" value="ECO:0000318"/>
    <property type="project" value="GO_Central"/>
</dbReference>
<dbReference type="GO" id="GO:0031721">
    <property type="term" value="F:hemoglobin alpha binding"/>
    <property type="evidence" value="ECO:0000318"/>
    <property type="project" value="GO_Central"/>
</dbReference>
<dbReference type="GO" id="GO:0046872">
    <property type="term" value="F:metal ion binding"/>
    <property type="evidence" value="ECO:0007669"/>
    <property type="project" value="UniProtKB-KW"/>
</dbReference>
<dbReference type="GO" id="GO:0019825">
    <property type="term" value="F:oxygen binding"/>
    <property type="evidence" value="ECO:0000318"/>
    <property type="project" value="GO_Central"/>
</dbReference>
<dbReference type="GO" id="GO:0005344">
    <property type="term" value="F:oxygen carrier activity"/>
    <property type="evidence" value="ECO:0000318"/>
    <property type="project" value="GO_Central"/>
</dbReference>
<dbReference type="GO" id="GO:0098869">
    <property type="term" value="P:cellular oxidant detoxification"/>
    <property type="evidence" value="ECO:0007669"/>
    <property type="project" value="GOC"/>
</dbReference>
<dbReference type="GO" id="GO:0042744">
    <property type="term" value="P:hydrogen peroxide catabolic process"/>
    <property type="evidence" value="ECO:0000318"/>
    <property type="project" value="GO_Central"/>
</dbReference>
<dbReference type="CDD" id="cd08925">
    <property type="entry name" value="Hb-beta-like"/>
    <property type="match status" value="1"/>
</dbReference>
<dbReference type="FunFam" id="1.10.490.10:FF:000001">
    <property type="entry name" value="Hemoglobin subunit beta"/>
    <property type="match status" value="1"/>
</dbReference>
<dbReference type="Gene3D" id="1.10.490.10">
    <property type="entry name" value="Globins"/>
    <property type="match status" value="1"/>
</dbReference>
<dbReference type="InterPro" id="IPR000971">
    <property type="entry name" value="Globin"/>
</dbReference>
<dbReference type="InterPro" id="IPR009050">
    <property type="entry name" value="Globin-like_sf"/>
</dbReference>
<dbReference type="InterPro" id="IPR012292">
    <property type="entry name" value="Globin/Proto"/>
</dbReference>
<dbReference type="InterPro" id="IPR002337">
    <property type="entry name" value="Hemoglobin_b"/>
</dbReference>
<dbReference type="InterPro" id="IPR050056">
    <property type="entry name" value="Hemoglobin_oxygen_transport"/>
</dbReference>
<dbReference type="PANTHER" id="PTHR11442">
    <property type="entry name" value="HEMOGLOBIN FAMILY MEMBER"/>
    <property type="match status" value="1"/>
</dbReference>
<dbReference type="PANTHER" id="PTHR11442:SF52">
    <property type="entry name" value="HEMOGLOBIN SUBUNIT GAMMA-1"/>
    <property type="match status" value="1"/>
</dbReference>
<dbReference type="Pfam" id="PF00042">
    <property type="entry name" value="Globin"/>
    <property type="match status" value="1"/>
</dbReference>
<dbReference type="PRINTS" id="PR00814">
    <property type="entry name" value="BETAHAEM"/>
</dbReference>
<dbReference type="SUPFAM" id="SSF46458">
    <property type="entry name" value="Globin-like"/>
    <property type="match status" value="1"/>
</dbReference>
<dbReference type="PROSITE" id="PS01033">
    <property type="entry name" value="GLOBIN"/>
    <property type="match status" value="1"/>
</dbReference>
<accession>P61920</accession>
<accession>P02096</accession>
<proteinExistence type="evidence at protein level"/>
<sequence>MGHFTEEDKATITSLWGKVNVEDAGGETLGRLLVVYPWTQRFFDSFGNLSSASAIMGNPKVKAHGKKVLTSLGDAIKHLDDLKGTFAQLSELHCDKLHVDPENFKLLGNVLVTVLAIHFGKEFTPEVQASWQKMVTAVASALSSRYH</sequence>